<protein>
    <recommendedName>
        <fullName>D-hydantoinase</fullName>
        <ecNumber>3.5.2.-</ecNumber>
    </recommendedName>
</protein>
<reference key="1">
    <citation type="journal article" date="2002" name="Nature">
        <title>Complete genome sequence of the model actinomycete Streptomyces coelicolor A3(2).</title>
        <authorList>
            <person name="Bentley S.D."/>
            <person name="Chater K.F."/>
            <person name="Cerdeno-Tarraga A.-M."/>
            <person name="Challis G.L."/>
            <person name="Thomson N.R."/>
            <person name="James K.D."/>
            <person name="Harris D.E."/>
            <person name="Quail M.A."/>
            <person name="Kieser H."/>
            <person name="Harper D."/>
            <person name="Bateman A."/>
            <person name="Brown S."/>
            <person name="Chandra G."/>
            <person name="Chen C.W."/>
            <person name="Collins M."/>
            <person name="Cronin A."/>
            <person name="Fraser A."/>
            <person name="Goble A."/>
            <person name="Hidalgo J."/>
            <person name="Hornsby T."/>
            <person name="Howarth S."/>
            <person name="Huang C.-H."/>
            <person name="Kieser T."/>
            <person name="Larke L."/>
            <person name="Murphy L.D."/>
            <person name="Oliver K."/>
            <person name="O'Neil S."/>
            <person name="Rabbinowitsch E."/>
            <person name="Rajandream M.A."/>
            <person name="Rutherford K.M."/>
            <person name="Rutter S."/>
            <person name="Seeger K."/>
            <person name="Saunders D."/>
            <person name="Sharp S."/>
            <person name="Squares R."/>
            <person name="Squares S."/>
            <person name="Taylor K."/>
            <person name="Warren T."/>
            <person name="Wietzorrek A."/>
            <person name="Woodward J.R."/>
            <person name="Barrell B.G."/>
            <person name="Parkhill J."/>
            <person name="Hopwood D.A."/>
        </authorList>
    </citation>
    <scope>NUCLEOTIDE SEQUENCE [LARGE SCALE GENOMIC DNA]</scope>
    <source>
        <strain>ATCC BAA-471 / A3(2) / M145</strain>
    </source>
</reference>
<keyword id="KW-0378">Hydrolase</keyword>
<keyword id="KW-0479">Metal-binding</keyword>
<keyword id="KW-1185">Reference proteome</keyword>
<keyword id="KW-0862">Zinc</keyword>
<gene>
    <name type="primary">hyuA</name>
    <name type="ordered locus">SCO6415</name>
    <name type="ORF">SC1A6.04</name>
</gene>
<accession>O69809</accession>
<proteinExistence type="inferred from homology"/>
<feature type="chain" id="PRO_0000165936" description="D-hydantoinase">
    <location>
        <begin position="1"/>
        <end position="467"/>
    </location>
</feature>
<feature type="binding site" evidence="3">
    <location>
        <position position="65"/>
    </location>
    <ligand>
        <name>Zn(2+)</name>
        <dbReference type="ChEBI" id="CHEBI:29105"/>
        <label>1</label>
    </ligand>
</feature>
<feature type="binding site" evidence="3">
    <location>
        <position position="67"/>
    </location>
    <ligand>
        <name>Zn(2+)</name>
        <dbReference type="ChEBI" id="CHEBI:29105"/>
        <label>1</label>
    </ligand>
</feature>
<feature type="binding site" description="via carbamate group" evidence="3">
    <location>
        <position position="156"/>
    </location>
    <ligand>
        <name>Zn(2+)</name>
        <dbReference type="ChEBI" id="CHEBI:29105"/>
        <label>1</label>
    </ligand>
</feature>
<feature type="binding site" description="via carbamate group" evidence="3">
    <location>
        <position position="156"/>
    </location>
    <ligand>
        <name>Zn(2+)</name>
        <dbReference type="ChEBI" id="CHEBI:29105"/>
        <label>2</label>
    </ligand>
</feature>
<feature type="binding site" evidence="3">
    <location>
        <position position="161"/>
    </location>
    <ligand>
        <name>substrate</name>
    </ligand>
</feature>
<feature type="binding site" evidence="3">
    <location>
        <position position="189"/>
    </location>
    <ligand>
        <name>Zn(2+)</name>
        <dbReference type="ChEBI" id="CHEBI:29105"/>
        <label>2</label>
    </ligand>
</feature>
<feature type="binding site" evidence="3">
    <location>
        <position position="245"/>
    </location>
    <ligand>
        <name>Zn(2+)</name>
        <dbReference type="ChEBI" id="CHEBI:29105"/>
        <label>2</label>
    </ligand>
</feature>
<feature type="binding site" evidence="3">
    <location>
        <position position="294"/>
    </location>
    <ligand>
        <name>substrate</name>
    </ligand>
</feature>
<feature type="binding site" evidence="3">
    <location>
        <position position="321"/>
    </location>
    <ligand>
        <name>Zn(2+)</name>
        <dbReference type="ChEBI" id="CHEBI:29105"/>
        <label>1</label>
    </ligand>
</feature>
<feature type="binding site" evidence="3">
    <location>
        <position position="343"/>
    </location>
    <ligand>
        <name>substrate</name>
    </ligand>
</feature>
<feature type="modified residue" description="N6-carboxylysine" evidence="3">
    <location>
        <position position="156"/>
    </location>
</feature>
<comment type="function">
    <text evidence="1">Catalyzes the stereospecific hydrolysis of the cyclic amide bond of D-hydantoin derivatives.</text>
</comment>
<comment type="cofactor">
    <cofactor evidence="2">
        <name>Zn(2+)</name>
        <dbReference type="ChEBI" id="CHEBI:29105"/>
    </cofactor>
    <text evidence="2">Binds 2 Zn(2+) ions per subunit.</text>
</comment>
<comment type="subunit">
    <text evidence="1">Homotetramer.</text>
</comment>
<comment type="PTM">
    <text evidence="1">Carboxylation allows a single lysine to coordinate two zinc ions.</text>
</comment>
<comment type="similarity">
    <text evidence="4">Belongs to the metallo-dependent hydrolases superfamily. Hydantoinase/dihydropyrimidinase family.</text>
</comment>
<evidence type="ECO:0000250" key="1"/>
<evidence type="ECO:0000250" key="2">
    <source>
        <dbReference type="UniProtKB" id="Q55DL0"/>
    </source>
</evidence>
<evidence type="ECO:0000250" key="3">
    <source>
        <dbReference type="UniProtKB" id="Q9P903"/>
    </source>
</evidence>
<evidence type="ECO:0000305" key="4"/>
<organism>
    <name type="scientific">Streptomyces coelicolor (strain ATCC BAA-471 / A3(2) / M145)</name>
    <dbReference type="NCBI Taxonomy" id="100226"/>
    <lineage>
        <taxon>Bacteria</taxon>
        <taxon>Bacillati</taxon>
        <taxon>Actinomycetota</taxon>
        <taxon>Actinomycetes</taxon>
        <taxon>Kitasatosporales</taxon>
        <taxon>Streptomycetaceae</taxon>
        <taxon>Streptomyces</taxon>
        <taxon>Streptomyces albidoflavus group</taxon>
    </lineage>
</organism>
<sequence length="467" mass="50748">MSSRTVIRGGLVITASDEIHADVLIEDGRVAALAATGTPAAEAFTAENVIDASGKYVIPGGVDGHTHMEMPFGGTYAADTFETGTRAAAWGGTTTIVDFAIQSVGHSLREGLDAWHAKAEGNCAIDYGFHMIVSDVNQETLKEMDLLVEEGVTSFKQFMAYPGVFYSDDGQILRAMQRAAENGGLIMMHAENGIAIDVLVEQALARGETDPRFHGEVRKALLEAEATHRAIRLAQVAGAPLYVVHVSATEAVAELTRARDEGLPVFGETCPQYLFLSTDNLAEPDFEGAKYVCSTPLRPKEHQAALWRGLRTNDLQVVSTDHCPFCFSGQKELGRGDFSRIPNGMPGVENRMDLLHQAVVEGHIGRRRWIEIACATPARMFGLYPKKGTIAPGADADIVVYDPHAEQVISAETHHMNVDYSAYEGRRITGRVETVLSRGEPVVTEREYTGRKGHGAYTPRATCQYLT</sequence>
<dbReference type="EC" id="3.5.2.-"/>
<dbReference type="EMBL" id="AL939127">
    <property type="protein sequence ID" value="CAA18902.1"/>
    <property type="molecule type" value="Genomic_DNA"/>
</dbReference>
<dbReference type="PIR" id="T28685">
    <property type="entry name" value="T28685"/>
</dbReference>
<dbReference type="RefSeq" id="NP_630501.1">
    <property type="nucleotide sequence ID" value="NC_003888.3"/>
</dbReference>
<dbReference type="SMR" id="O69809"/>
<dbReference type="STRING" id="100226.gene:17764072"/>
<dbReference type="PaxDb" id="100226-SCO6415"/>
<dbReference type="KEGG" id="sco:SCO6415"/>
<dbReference type="PATRIC" id="fig|100226.15.peg.6515"/>
<dbReference type="eggNOG" id="COG0044">
    <property type="taxonomic scope" value="Bacteria"/>
</dbReference>
<dbReference type="HOGENOM" id="CLU_015572_2_0_11"/>
<dbReference type="InParanoid" id="O69809"/>
<dbReference type="OrthoDB" id="9775759at2"/>
<dbReference type="PhylomeDB" id="O69809"/>
<dbReference type="BRENDA" id="3.5.2.2">
    <property type="organism ID" value="5998"/>
</dbReference>
<dbReference type="Proteomes" id="UP000001973">
    <property type="component" value="Chromosome"/>
</dbReference>
<dbReference type="GO" id="GO:0005829">
    <property type="term" value="C:cytosol"/>
    <property type="evidence" value="ECO:0000318"/>
    <property type="project" value="GO_Central"/>
</dbReference>
<dbReference type="GO" id="GO:0016812">
    <property type="term" value="F:hydrolase activity, acting on carbon-nitrogen (but not peptide) bonds, in cyclic amides"/>
    <property type="evidence" value="ECO:0000318"/>
    <property type="project" value="GO_Central"/>
</dbReference>
<dbReference type="GO" id="GO:0046872">
    <property type="term" value="F:metal ion binding"/>
    <property type="evidence" value="ECO:0007669"/>
    <property type="project" value="UniProtKB-KW"/>
</dbReference>
<dbReference type="CDD" id="cd01314">
    <property type="entry name" value="D-HYD"/>
    <property type="match status" value="1"/>
</dbReference>
<dbReference type="FunFam" id="3.20.20.140:FF:000037">
    <property type="entry name" value="Dihydropyrimidinase"/>
    <property type="match status" value="1"/>
</dbReference>
<dbReference type="Gene3D" id="3.20.20.140">
    <property type="entry name" value="Metal-dependent hydrolases"/>
    <property type="match status" value="1"/>
</dbReference>
<dbReference type="Gene3D" id="2.30.40.10">
    <property type="entry name" value="Urease, subunit C, domain 1"/>
    <property type="match status" value="1"/>
</dbReference>
<dbReference type="InterPro" id="IPR006680">
    <property type="entry name" value="Amidohydro-rel"/>
</dbReference>
<dbReference type="InterPro" id="IPR011778">
    <property type="entry name" value="Hydantoinase/dihydroPyrase"/>
</dbReference>
<dbReference type="InterPro" id="IPR011059">
    <property type="entry name" value="Metal-dep_hydrolase_composite"/>
</dbReference>
<dbReference type="InterPro" id="IPR032466">
    <property type="entry name" value="Metal_Hydrolase"/>
</dbReference>
<dbReference type="InterPro" id="IPR050378">
    <property type="entry name" value="Metallo-dep_Hydrolases_sf"/>
</dbReference>
<dbReference type="NCBIfam" id="TIGR02033">
    <property type="entry name" value="D-hydantoinase"/>
    <property type="match status" value="1"/>
</dbReference>
<dbReference type="PANTHER" id="PTHR11647:SF1">
    <property type="entry name" value="COLLAPSIN RESPONSE MEDIATOR PROTEIN"/>
    <property type="match status" value="1"/>
</dbReference>
<dbReference type="PANTHER" id="PTHR11647">
    <property type="entry name" value="HYDRANTOINASE/DIHYDROPYRIMIDINASE FAMILY MEMBER"/>
    <property type="match status" value="1"/>
</dbReference>
<dbReference type="Pfam" id="PF01979">
    <property type="entry name" value="Amidohydro_1"/>
    <property type="match status" value="1"/>
</dbReference>
<dbReference type="SUPFAM" id="SSF51338">
    <property type="entry name" value="Composite domain of metallo-dependent hydrolases"/>
    <property type="match status" value="2"/>
</dbReference>
<dbReference type="SUPFAM" id="SSF51556">
    <property type="entry name" value="Metallo-dependent hydrolases"/>
    <property type="match status" value="1"/>
</dbReference>
<name>HYDA_STRCO</name>